<protein>
    <recommendedName>
        <fullName>Sensor histidine kinase YclK</fullName>
        <ecNumber>2.7.13.3</ecNumber>
    </recommendedName>
</protein>
<evidence type="ECO:0000255" key="1"/>
<evidence type="ECO:0000255" key="2">
    <source>
        <dbReference type="PROSITE-ProRule" id="PRU00102"/>
    </source>
</evidence>
<evidence type="ECO:0000255" key="3">
    <source>
        <dbReference type="PROSITE-ProRule" id="PRU00107"/>
    </source>
</evidence>
<evidence type="ECO:0000269" key="4">
    <source>
    </source>
</evidence>
<evidence type="ECO:0000305" key="5"/>
<keyword id="KW-0067">ATP-binding</keyword>
<keyword id="KW-1003">Cell membrane</keyword>
<keyword id="KW-0418">Kinase</keyword>
<keyword id="KW-0472">Membrane</keyword>
<keyword id="KW-0547">Nucleotide-binding</keyword>
<keyword id="KW-0597">Phosphoprotein</keyword>
<keyword id="KW-1185">Reference proteome</keyword>
<keyword id="KW-0808">Transferase</keyword>
<keyword id="KW-0812">Transmembrane</keyword>
<keyword id="KW-1133">Transmembrane helix</keyword>
<keyword id="KW-0902">Two-component regulatory system</keyword>
<sequence>MMKIKYLYQLLLSHISILILAFVIIISLFSHFVKEFAYQNKVEELTSYAVQIANEFQSGQVDMRRLYPYQDILSTRKTQFIIFNEEQQPYFLPEGFHHPPREQLKKSEWNKLKKGQTVTIRADGRFDDEVSLVAQPIFVQNEFKGAVLLISPISGVEQMVNQVNLYMFYAVISTLVITILVSWLLSKFHVKRIQKLREATDKVASGDYDIHLENSYGDEIGVLASDFNIMAKKLKQSRDEIERLEKRRRQFIADVSHELKTPLTTINGLVEGLNSHTIPEDKKDKCFSLISEETKRMLRLVKENLDYEKIRSQQITLNKLDVPLIEVFEIVKEHLQQQAEEKQNKLMIQVEDHVIVHADYDRFIQILVNITKNSIQFTQNGDIWLRGMEGYKETIIEIEDTGIGIPKEDIEHIWERFYKADISRTNTAYGEYGLGLSIVRQLVEMHQGTVEIKSEEGKGTKFIIRLPLTAKQQ</sequence>
<gene>
    <name type="primary">yclK</name>
    <name type="ordered locus">BSU03760</name>
</gene>
<dbReference type="EC" id="2.7.13.3"/>
<dbReference type="EMBL" id="D50453">
    <property type="protein sequence ID" value="BAA09008.1"/>
    <property type="molecule type" value="Genomic_DNA"/>
</dbReference>
<dbReference type="EMBL" id="AL009126">
    <property type="protein sequence ID" value="CAB12184.1"/>
    <property type="molecule type" value="Genomic_DNA"/>
</dbReference>
<dbReference type="PIR" id="H69762">
    <property type="entry name" value="H69762"/>
</dbReference>
<dbReference type="RefSeq" id="NP_388258.1">
    <property type="nucleotide sequence ID" value="NC_000964.3"/>
</dbReference>
<dbReference type="RefSeq" id="WP_009969263.1">
    <property type="nucleotide sequence ID" value="NZ_OZ025638.1"/>
</dbReference>
<dbReference type="SMR" id="P94414"/>
<dbReference type="FunCoup" id="P94414">
    <property type="interactions" value="89"/>
</dbReference>
<dbReference type="STRING" id="224308.BSU03760"/>
<dbReference type="PaxDb" id="224308-BSU03760"/>
<dbReference type="DNASU" id="938283"/>
<dbReference type="EnsemblBacteria" id="CAB12184">
    <property type="protein sequence ID" value="CAB12184"/>
    <property type="gene ID" value="BSU_03760"/>
</dbReference>
<dbReference type="GeneID" id="938283"/>
<dbReference type="KEGG" id="bsu:BSU03760"/>
<dbReference type="PATRIC" id="fig|224308.43.peg.389"/>
<dbReference type="eggNOG" id="COG3850">
    <property type="taxonomic scope" value="Bacteria"/>
</dbReference>
<dbReference type="eggNOG" id="COG5002">
    <property type="taxonomic scope" value="Bacteria"/>
</dbReference>
<dbReference type="InParanoid" id="P94414"/>
<dbReference type="OrthoDB" id="3436at2"/>
<dbReference type="PhylomeDB" id="P94414"/>
<dbReference type="BioCyc" id="BSUB:BSU03760-MONOMER"/>
<dbReference type="Proteomes" id="UP000001570">
    <property type="component" value="Chromosome"/>
</dbReference>
<dbReference type="GO" id="GO:0005886">
    <property type="term" value="C:plasma membrane"/>
    <property type="evidence" value="ECO:0007669"/>
    <property type="project" value="UniProtKB-SubCell"/>
</dbReference>
<dbReference type="GO" id="GO:0005524">
    <property type="term" value="F:ATP binding"/>
    <property type="evidence" value="ECO:0007669"/>
    <property type="project" value="UniProtKB-KW"/>
</dbReference>
<dbReference type="GO" id="GO:0000156">
    <property type="term" value="F:phosphorelay response regulator activity"/>
    <property type="evidence" value="ECO:0000318"/>
    <property type="project" value="GO_Central"/>
</dbReference>
<dbReference type="GO" id="GO:0000155">
    <property type="term" value="F:phosphorelay sensor kinase activity"/>
    <property type="evidence" value="ECO:0007669"/>
    <property type="project" value="InterPro"/>
</dbReference>
<dbReference type="GO" id="GO:0030295">
    <property type="term" value="F:protein kinase activator activity"/>
    <property type="evidence" value="ECO:0000318"/>
    <property type="project" value="GO_Central"/>
</dbReference>
<dbReference type="GO" id="GO:0007234">
    <property type="term" value="P:osmosensory signaling via phosphorelay pathway"/>
    <property type="evidence" value="ECO:0000318"/>
    <property type="project" value="GO_Central"/>
</dbReference>
<dbReference type="CDD" id="cd06225">
    <property type="entry name" value="HAMP"/>
    <property type="match status" value="1"/>
</dbReference>
<dbReference type="CDD" id="cd00082">
    <property type="entry name" value="HisKA"/>
    <property type="match status" value="1"/>
</dbReference>
<dbReference type="FunFam" id="3.30.565.10:FF:000006">
    <property type="entry name" value="Sensor histidine kinase WalK"/>
    <property type="match status" value="1"/>
</dbReference>
<dbReference type="FunFam" id="1.10.287.130:FF:000001">
    <property type="entry name" value="Two-component sensor histidine kinase"/>
    <property type="match status" value="1"/>
</dbReference>
<dbReference type="Gene3D" id="1.10.287.130">
    <property type="match status" value="1"/>
</dbReference>
<dbReference type="Gene3D" id="6.10.340.10">
    <property type="match status" value="1"/>
</dbReference>
<dbReference type="Gene3D" id="3.30.565.10">
    <property type="entry name" value="Histidine kinase-like ATPase, C-terminal domain"/>
    <property type="match status" value="1"/>
</dbReference>
<dbReference type="InterPro" id="IPR050398">
    <property type="entry name" value="Bact_Sensor_His_Kinase"/>
</dbReference>
<dbReference type="InterPro" id="IPR003660">
    <property type="entry name" value="HAMP_dom"/>
</dbReference>
<dbReference type="InterPro" id="IPR036890">
    <property type="entry name" value="HATPase_C_sf"/>
</dbReference>
<dbReference type="InterPro" id="IPR005467">
    <property type="entry name" value="His_kinase_dom"/>
</dbReference>
<dbReference type="InterPro" id="IPR003661">
    <property type="entry name" value="HisK_dim/P_dom"/>
</dbReference>
<dbReference type="InterPro" id="IPR036097">
    <property type="entry name" value="HisK_dim/P_sf"/>
</dbReference>
<dbReference type="InterPro" id="IPR004358">
    <property type="entry name" value="Sig_transdc_His_kin-like_C"/>
</dbReference>
<dbReference type="PANTHER" id="PTHR45528">
    <property type="entry name" value="SENSOR HISTIDINE KINASE CPXA"/>
    <property type="match status" value="1"/>
</dbReference>
<dbReference type="PANTHER" id="PTHR45528:SF1">
    <property type="entry name" value="SENSOR HISTIDINE KINASE CPXA"/>
    <property type="match status" value="1"/>
</dbReference>
<dbReference type="Pfam" id="PF00672">
    <property type="entry name" value="HAMP"/>
    <property type="match status" value="1"/>
</dbReference>
<dbReference type="Pfam" id="PF02518">
    <property type="entry name" value="HATPase_c"/>
    <property type="match status" value="1"/>
</dbReference>
<dbReference type="Pfam" id="PF00512">
    <property type="entry name" value="HisKA"/>
    <property type="match status" value="1"/>
</dbReference>
<dbReference type="PRINTS" id="PR00344">
    <property type="entry name" value="BCTRLSENSOR"/>
</dbReference>
<dbReference type="SMART" id="SM00304">
    <property type="entry name" value="HAMP"/>
    <property type="match status" value="1"/>
</dbReference>
<dbReference type="SMART" id="SM00387">
    <property type="entry name" value="HATPase_c"/>
    <property type="match status" value="1"/>
</dbReference>
<dbReference type="SMART" id="SM00388">
    <property type="entry name" value="HisKA"/>
    <property type="match status" value="1"/>
</dbReference>
<dbReference type="SUPFAM" id="SSF55874">
    <property type="entry name" value="ATPase domain of HSP90 chaperone/DNA topoisomerase II/histidine kinase"/>
    <property type="match status" value="1"/>
</dbReference>
<dbReference type="SUPFAM" id="SSF158472">
    <property type="entry name" value="HAMP domain-like"/>
    <property type="match status" value="1"/>
</dbReference>
<dbReference type="SUPFAM" id="SSF47384">
    <property type="entry name" value="Homodimeric domain of signal transducing histidine kinase"/>
    <property type="match status" value="1"/>
</dbReference>
<dbReference type="PROSITE" id="PS50885">
    <property type="entry name" value="HAMP"/>
    <property type="match status" value="1"/>
</dbReference>
<dbReference type="PROSITE" id="PS50109">
    <property type="entry name" value="HIS_KIN"/>
    <property type="match status" value="1"/>
</dbReference>
<accession>P94414</accession>
<feature type="chain" id="PRO_0000074921" description="Sensor histidine kinase YclK">
    <location>
        <begin position="1"/>
        <end position="473"/>
    </location>
</feature>
<feature type="topological domain" description="Cytoplasmic" evidence="1">
    <location>
        <begin position="1"/>
        <end position="9"/>
    </location>
</feature>
<feature type="transmembrane region" description="Helical" evidence="1">
    <location>
        <begin position="10"/>
        <end position="30"/>
    </location>
</feature>
<feature type="topological domain" description="Extracellular" evidence="1">
    <location>
        <begin position="31"/>
        <end position="164"/>
    </location>
</feature>
<feature type="transmembrane region" description="Helical" evidence="1">
    <location>
        <begin position="165"/>
        <end position="185"/>
    </location>
</feature>
<feature type="topological domain" description="Cytoplasmic" evidence="1">
    <location>
        <begin position="186"/>
        <end position="473"/>
    </location>
</feature>
<feature type="domain" description="HAMP" evidence="2">
    <location>
        <begin position="187"/>
        <end position="239"/>
    </location>
</feature>
<feature type="domain" description="Histidine kinase" evidence="3">
    <location>
        <begin position="254"/>
        <end position="470"/>
    </location>
</feature>
<feature type="modified residue" description="Phosphohistidine; by autocatalysis" evidence="3">
    <location>
        <position position="257"/>
    </location>
</feature>
<proteinExistence type="inferred from homology"/>
<organism>
    <name type="scientific">Bacillus subtilis (strain 168)</name>
    <dbReference type="NCBI Taxonomy" id="224308"/>
    <lineage>
        <taxon>Bacteria</taxon>
        <taxon>Bacillati</taxon>
        <taxon>Bacillota</taxon>
        <taxon>Bacilli</taxon>
        <taxon>Bacillales</taxon>
        <taxon>Bacillaceae</taxon>
        <taxon>Bacillus</taxon>
    </lineage>
</organism>
<comment type="function">
    <text evidence="4">Could be member of the two-component regulatory system YclK/YclJ. Potentially phosphorylates YclJ.</text>
</comment>
<comment type="catalytic activity">
    <reaction>
        <text>ATP + protein L-histidine = ADP + protein N-phospho-L-histidine.</text>
        <dbReference type="EC" id="2.7.13.3"/>
    </reaction>
</comment>
<comment type="subcellular location">
    <subcellularLocation>
        <location evidence="5">Cell membrane</location>
        <topology evidence="5">Multi-pass membrane protein</topology>
    </subcellularLocation>
</comment>
<name>YCLK_BACSU</name>
<reference key="1">
    <citation type="journal article" date="1996" name="Microbiology">
        <title>The 25 degrees-36 degrees region of the Bacillus subtilis chromosome: determination of the sequence of a 146 kb segment and identification of 113 genes.</title>
        <authorList>
            <person name="Yamane K."/>
            <person name="Kumano M."/>
            <person name="Kurita K."/>
        </authorList>
    </citation>
    <scope>NUCLEOTIDE SEQUENCE [GENOMIC DNA]</scope>
    <source>
        <strain>168</strain>
    </source>
</reference>
<reference key="2">
    <citation type="journal article" date="1997" name="Nature">
        <title>The complete genome sequence of the Gram-positive bacterium Bacillus subtilis.</title>
        <authorList>
            <person name="Kunst F."/>
            <person name="Ogasawara N."/>
            <person name="Moszer I."/>
            <person name="Albertini A.M."/>
            <person name="Alloni G."/>
            <person name="Azevedo V."/>
            <person name="Bertero M.G."/>
            <person name="Bessieres P."/>
            <person name="Bolotin A."/>
            <person name="Borchert S."/>
            <person name="Borriss R."/>
            <person name="Boursier L."/>
            <person name="Brans A."/>
            <person name="Braun M."/>
            <person name="Brignell S.C."/>
            <person name="Bron S."/>
            <person name="Brouillet S."/>
            <person name="Bruschi C.V."/>
            <person name="Caldwell B."/>
            <person name="Capuano V."/>
            <person name="Carter N.M."/>
            <person name="Choi S.-K."/>
            <person name="Codani J.-J."/>
            <person name="Connerton I.F."/>
            <person name="Cummings N.J."/>
            <person name="Daniel R.A."/>
            <person name="Denizot F."/>
            <person name="Devine K.M."/>
            <person name="Duesterhoeft A."/>
            <person name="Ehrlich S.D."/>
            <person name="Emmerson P.T."/>
            <person name="Entian K.-D."/>
            <person name="Errington J."/>
            <person name="Fabret C."/>
            <person name="Ferrari E."/>
            <person name="Foulger D."/>
            <person name="Fritz C."/>
            <person name="Fujita M."/>
            <person name="Fujita Y."/>
            <person name="Fuma S."/>
            <person name="Galizzi A."/>
            <person name="Galleron N."/>
            <person name="Ghim S.-Y."/>
            <person name="Glaser P."/>
            <person name="Goffeau A."/>
            <person name="Golightly E.J."/>
            <person name="Grandi G."/>
            <person name="Guiseppi G."/>
            <person name="Guy B.J."/>
            <person name="Haga K."/>
            <person name="Haiech J."/>
            <person name="Harwood C.R."/>
            <person name="Henaut A."/>
            <person name="Hilbert H."/>
            <person name="Holsappel S."/>
            <person name="Hosono S."/>
            <person name="Hullo M.-F."/>
            <person name="Itaya M."/>
            <person name="Jones L.-M."/>
            <person name="Joris B."/>
            <person name="Karamata D."/>
            <person name="Kasahara Y."/>
            <person name="Klaerr-Blanchard M."/>
            <person name="Klein C."/>
            <person name="Kobayashi Y."/>
            <person name="Koetter P."/>
            <person name="Koningstein G."/>
            <person name="Krogh S."/>
            <person name="Kumano M."/>
            <person name="Kurita K."/>
            <person name="Lapidus A."/>
            <person name="Lardinois S."/>
            <person name="Lauber J."/>
            <person name="Lazarevic V."/>
            <person name="Lee S.-M."/>
            <person name="Levine A."/>
            <person name="Liu H."/>
            <person name="Masuda S."/>
            <person name="Mauel C."/>
            <person name="Medigue C."/>
            <person name="Medina N."/>
            <person name="Mellado R.P."/>
            <person name="Mizuno M."/>
            <person name="Moestl D."/>
            <person name="Nakai S."/>
            <person name="Noback M."/>
            <person name="Noone D."/>
            <person name="O'Reilly M."/>
            <person name="Ogawa K."/>
            <person name="Ogiwara A."/>
            <person name="Oudega B."/>
            <person name="Park S.-H."/>
            <person name="Parro V."/>
            <person name="Pohl T.M."/>
            <person name="Portetelle D."/>
            <person name="Porwollik S."/>
            <person name="Prescott A.M."/>
            <person name="Presecan E."/>
            <person name="Pujic P."/>
            <person name="Purnelle B."/>
            <person name="Rapoport G."/>
            <person name="Rey M."/>
            <person name="Reynolds S."/>
            <person name="Rieger M."/>
            <person name="Rivolta C."/>
            <person name="Rocha E."/>
            <person name="Roche B."/>
            <person name="Rose M."/>
            <person name="Sadaie Y."/>
            <person name="Sato T."/>
            <person name="Scanlan E."/>
            <person name="Schleich S."/>
            <person name="Schroeter R."/>
            <person name="Scoffone F."/>
            <person name="Sekiguchi J."/>
            <person name="Sekowska A."/>
            <person name="Seror S.J."/>
            <person name="Serror P."/>
            <person name="Shin B.-S."/>
            <person name="Soldo B."/>
            <person name="Sorokin A."/>
            <person name="Tacconi E."/>
            <person name="Takagi T."/>
            <person name="Takahashi H."/>
            <person name="Takemaru K."/>
            <person name="Takeuchi M."/>
            <person name="Tamakoshi A."/>
            <person name="Tanaka T."/>
            <person name="Terpstra P."/>
            <person name="Tognoni A."/>
            <person name="Tosato V."/>
            <person name="Uchiyama S."/>
            <person name="Vandenbol M."/>
            <person name="Vannier F."/>
            <person name="Vassarotti A."/>
            <person name="Viari A."/>
            <person name="Wambutt R."/>
            <person name="Wedler E."/>
            <person name="Wedler H."/>
            <person name="Weitzenegger T."/>
            <person name="Winters P."/>
            <person name="Wipat A."/>
            <person name="Yamamoto H."/>
            <person name="Yamane K."/>
            <person name="Yasumoto K."/>
            <person name="Yata K."/>
            <person name="Yoshida K."/>
            <person name="Yoshikawa H.-F."/>
            <person name="Zumstein E."/>
            <person name="Yoshikawa H."/>
            <person name="Danchin A."/>
        </authorList>
    </citation>
    <scope>NUCLEOTIDE SEQUENCE [LARGE SCALE GENOMIC DNA]</scope>
    <source>
        <strain>168</strain>
    </source>
</reference>
<reference key="3">
    <citation type="journal article" date="2001" name="J. Bacteriol.">
        <title>Comprehensive DNA microarray analysis of Bacillus subtilis two-component regulatory systems.</title>
        <authorList>
            <person name="Kobayashi K."/>
            <person name="Ogura M."/>
            <person name="Yamaguchi H."/>
            <person name="Yoshida K."/>
            <person name="Ogasawara N."/>
            <person name="Tanaka T."/>
            <person name="Fujita Y."/>
        </authorList>
    </citation>
    <scope>FUNCTION</scope>
</reference>